<feature type="signal peptide" evidence="2">
    <location>
        <begin position="1"/>
        <end position="16"/>
    </location>
</feature>
<feature type="chain" id="PRO_0000262726" description="Uncharacterized lipoprotein RC0077">
    <location>
        <begin position="17"/>
        <end position="127"/>
    </location>
</feature>
<feature type="region of interest" description="Disordered" evidence="3">
    <location>
        <begin position="107"/>
        <end position="127"/>
    </location>
</feature>
<feature type="coiled-coil region" evidence="1">
    <location>
        <begin position="56"/>
        <end position="101"/>
    </location>
</feature>
<feature type="compositionally biased region" description="Polar residues" evidence="3">
    <location>
        <begin position="107"/>
        <end position="118"/>
    </location>
</feature>
<feature type="lipid moiety-binding region" description="N-palmitoyl cysteine" evidence="2">
    <location>
        <position position="17"/>
    </location>
</feature>
<feature type="lipid moiety-binding region" description="S-diacylglycerol cysteine" evidence="2">
    <location>
        <position position="17"/>
    </location>
</feature>
<dbReference type="EMBL" id="AE006914">
    <property type="protein sequence ID" value="AAL02615.1"/>
    <property type="status" value="ALT_INIT"/>
    <property type="molecule type" value="Genomic_DNA"/>
</dbReference>
<dbReference type="PIR" id="E97709">
    <property type="entry name" value="E97709"/>
</dbReference>
<dbReference type="RefSeq" id="WP_016830601.1">
    <property type="nucleotide sequence ID" value="NC_003103.1"/>
</dbReference>
<dbReference type="SMR" id="Q92JJ0"/>
<dbReference type="GeneID" id="928532"/>
<dbReference type="KEGG" id="rco:RC0077"/>
<dbReference type="PATRIC" id="fig|272944.4.peg.90"/>
<dbReference type="HOGENOM" id="CLU_1968884_0_0_5"/>
<dbReference type="Proteomes" id="UP000000816">
    <property type="component" value="Chromosome"/>
</dbReference>
<dbReference type="GO" id="GO:0005886">
    <property type="term" value="C:plasma membrane"/>
    <property type="evidence" value="ECO:0007669"/>
    <property type="project" value="UniProtKB-SubCell"/>
</dbReference>
<dbReference type="PROSITE" id="PS51257">
    <property type="entry name" value="PROKAR_LIPOPROTEIN"/>
    <property type="match status" value="1"/>
</dbReference>
<accession>Q92JJ0</accession>
<name>Y077_RICCN</name>
<sequence length="127" mass="14395">MIKKIIFGIAILLSTSCFANSTTSDGSKKDAAKTNDITTQKIIDDFSAYAGTIKPEVREEIQKYRVAIVKINKKKRELYNRLSKEAQNFLAEQQKYKQKLSISKLTVENDQKNNTADSNDNKSKDTK</sequence>
<evidence type="ECO:0000255" key="1"/>
<evidence type="ECO:0000255" key="2">
    <source>
        <dbReference type="PROSITE-ProRule" id="PRU00303"/>
    </source>
</evidence>
<evidence type="ECO:0000256" key="3">
    <source>
        <dbReference type="SAM" id="MobiDB-lite"/>
    </source>
</evidence>
<evidence type="ECO:0000305" key="4"/>
<gene>
    <name type="ordered locus">RC0077</name>
</gene>
<proteinExistence type="inferred from homology"/>
<keyword id="KW-1003">Cell membrane</keyword>
<keyword id="KW-0175">Coiled coil</keyword>
<keyword id="KW-0449">Lipoprotein</keyword>
<keyword id="KW-0472">Membrane</keyword>
<keyword id="KW-0564">Palmitate</keyword>
<keyword id="KW-0732">Signal</keyword>
<reference key="1">
    <citation type="journal article" date="2001" name="Science">
        <title>Mechanisms of evolution in Rickettsia conorii and R. prowazekii.</title>
        <authorList>
            <person name="Ogata H."/>
            <person name="Audic S."/>
            <person name="Renesto-Audiffren P."/>
            <person name="Fournier P.-E."/>
            <person name="Barbe V."/>
            <person name="Samson D."/>
            <person name="Roux V."/>
            <person name="Cossart P."/>
            <person name="Weissenbach J."/>
            <person name="Claverie J.-M."/>
            <person name="Raoult D."/>
        </authorList>
    </citation>
    <scope>NUCLEOTIDE SEQUENCE [LARGE SCALE GENOMIC DNA]</scope>
    <source>
        <strain>ATCC VR-613 / Malish 7</strain>
    </source>
</reference>
<organism>
    <name type="scientific">Rickettsia conorii (strain ATCC VR-613 / Malish 7)</name>
    <dbReference type="NCBI Taxonomy" id="272944"/>
    <lineage>
        <taxon>Bacteria</taxon>
        <taxon>Pseudomonadati</taxon>
        <taxon>Pseudomonadota</taxon>
        <taxon>Alphaproteobacteria</taxon>
        <taxon>Rickettsiales</taxon>
        <taxon>Rickettsiaceae</taxon>
        <taxon>Rickettsieae</taxon>
        <taxon>Rickettsia</taxon>
        <taxon>spotted fever group</taxon>
    </lineage>
</organism>
<comment type="subcellular location">
    <subcellularLocation>
        <location evidence="2">Cell membrane</location>
        <topology evidence="2">Lipid-anchor</topology>
    </subcellularLocation>
</comment>
<comment type="sequence caution" evidence="4">
    <conflict type="erroneous initiation">
        <sequence resource="EMBL-CDS" id="AAL02615"/>
    </conflict>
</comment>
<protein>
    <recommendedName>
        <fullName>Uncharacterized lipoprotein RC0077</fullName>
    </recommendedName>
</protein>